<dbReference type="EC" id="2.4.1.18" evidence="1"/>
<dbReference type="EMBL" id="CP001091">
    <property type="protein sequence ID" value="ACE61003.1"/>
    <property type="molecule type" value="Genomic_DNA"/>
</dbReference>
<dbReference type="RefSeq" id="WP_005616806.1">
    <property type="nucleotide sequence ID" value="NC_010939.1"/>
</dbReference>
<dbReference type="SMR" id="B3H0J1"/>
<dbReference type="CAZy" id="CBM48">
    <property type="family name" value="Carbohydrate-Binding Module Family 48"/>
</dbReference>
<dbReference type="CAZy" id="GH13">
    <property type="family name" value="Glycoside Hydrolase Family 13"/>
</dbReference>
<dbReference type="KEGG" id="apa:APP7_0351"/>
<dbReference type="HOGENOM" id="CLU_004245_3_2_6"/>
<dbReference type="UniPathway" id="UPA00164"/>
<dbReference type="Proteomes" id="UP000001226">
    <property type="component" value="Chromosome"/>
</dbReference>
<dbReference type="GO" id="GO:0005829">
    <property type="term" value="C:cytosol"/>
    <property type="evidence" value="ECO:0007669"/>
    <property type="project" value="TreeGrafter"/>
</dbReference>
<dbReference type="GO" id="GO:0003844">
    <property type="term" value="F:1,4-alpha-glucan branching enzyme activity"/>
    <property type="evidence" value="ECO:0007669"/>
    <property type="project" value="UniProtKB-UniRule"/>
</dbReference>
<dbReference type="GO" id="GO:0043169">
    <property type="term" value="F:cation binding"/>
    <property type="evidence" value="ECO:0007669"/>
    <property type="project" value="InterPro"/>
</dbReference>
<dbReference type="GO" id="GO:0004553">
    <property type="term" value="F:hydrolase activity, hydrolyzing O-glycosyl compounds"/>
    <property type="evidence" value="ECO:0007669"/>
    <property type="project" value="InterPro"/>
</dbReference>
<dbReference type="GO" id="GO:0005978">
    <property type="term" value="P:glycogen biosynthetic process"/>
    <property type="evidence" value="ECO:0007669"/>
    <property type="project" value="UniProtKB-UniRule"/>
</dbReference>
<dbReference type="CDD" id="cd11322">
    <property type="entry name" value="AmyAc_Glg_BE"/>
    <property type="match status" value="1"/>
</dbReference>
<dbReference type="CDD" id="cd02855">
    <property type="entry name" value="E_set_GBE_prok_N"/>
    <property type="match status" value="1"/>
</dbReference>
<dbReference type="FunFam" id="2.60.40.10:FF:000169">
    <property type="entry name" value="1,4-alpha-glucan branching enzyme GlgB"/>
    <property type="match status" value="1"/>
</dbReference>
<dbReference type="FunFam" id="2.60.40.1180:FF:000002">
    <property type="entry name" value="1,4-alpha-glucan branching enzyme GlgB"/>
    <property type="match status" value="1"/>
</dbReference>
<dbReference type="FunFam" id="3.20.20.80:FF:000003">
    <property type="entry name" value="1,4-alpha-glucan branching enzyme GlgB"/>
    <property type="match status" value="1"/>
</dbReference>
<dbReference type="Gene3D" id="3.20.20.80">
    <property type="entry name" value="Glycosidases"/>
    <property type="match status" value="1"/>
</dbReference>
<dbReference type="Gene3D" id="2.60.40.1180">
    <property type="entry name" value="Golgi alpha-mannosidase II"/>
    <property type="match status" value="1"/>
</dbReference>
<dbReference type="Gene3D" id="2.60.40.10">
    <property type="entry name" value="Immunoglobulins"/>
    <property type="match status" value="1"/>
</dbReference>
<dbReference type="HAMAP" id="MF_00685">
    <property type="entry name" value="GlgB"/>
    <property type="match status" value="1"/>
</dbReference>
<dbReference type="InterPro" id="IPR006048">
    <property type="entry name" value="A-amylase/branching_C"/>
</dbReference>
<dbReference type="InterPro" id="IPR037439">
    <property type="entry name" value="Branching_enzy"/>
</dbReference>
<dbReference type="InterPro" id="IPR006407">
    <property type="entry name" value="GlgB"/>
</dbReference>
<dbReference type="InterPro" id="IPR054169">
    <property type="entry name" value="GlgB_N"/>
</dbReference>
<dbReference type="InterPro" id="IPR044143">
    <property type="entry name" value="GlgB_N_E_set_prok"/>
</dbReference>
<dbReference type="InterPro" id="IPR006047">
    <property type="entry name" value="Glyco_hydro_13_cat_dom"/>
</dbReference>
<dbReference type="InterPro" id="IPR004193">
    <property type="entry name" value="Glyco_hydro_13_N"/>
</dbReference>
<dbReference type="InterPro" id="IPR013780">
    <property type="entry name" value="Glyco_hydro_b"/>
</dbReference>
<dbReference type="InterPro" id="IPR017853">
    <property type="entry name" value="Glycoside_hydrolase_SF"/>
</dbReference>
<dbReference type="InterPro" id="IPR013783">
    <property type="entry name" value="Ig-like_fold"/>
</dbReference>
<dbReference type="InterPro" id="IPR014756">
    <property type="entry name" value="Ig_E-set"/>
</dbReference>
<dbReference type="NCBIfam" id="TIGR01515">
    <property type="entry name" value="branching_enzym"/>
    <property type="match status" value="1"/>
</dbReference>
<dbReference type="NCBIfam" id="NF003811">
    <property type="entry name" value="PRK05402.1"/>
    <property type="match status" value="1"/>
</dbReference>
<dbReference type="NCBIfam" id="NF008967">
    <property type="entry name" value="PRK12313.1"/>
    <property type="match status" value="1"/>
</dbReference>
<dbReference type="PANTHER" id="PTHR43651">
    <property type="entry name" value="1,4-ALPHA-GLUCAN-BRANCHING ENZYME"/>
    <property type="match status" value="1"/>
</dbReference>
<dbReference type="PANTHER" id="PTHR43651:SF3">
    <property type="entry name" value="1,4-ALPHA-GLUCAN-BRANCHING ENZYME"/>
    <property type="match status" value="1"/>
</dbReference>
<dbReference type="Pfam" id="PF00128">
    <property type="entry name" value="Alpha-amylase"/>
    <property type="match status" value="1"/>
</dbReference>
<dbReference type="Pfam" id="PF02806">
    <property type="entry name" value="Alpha-amylase_C"/>
    <property type="match status" value="1"/>
</dbReference>
<dbReference type="Pfam" id="PF02922">
    <property type="entry name" value="CBM_48"/>
    <property type="match status" value="1"/>
</dbReference>
<dbReference type="Pfam" id="PF22019">
    <property type="entry name" value="GlgB_N"/>
    <property type="match status" value="1"/>
</dbReference>
<dbReference type="PIRSF" id="PIRSF000463">
    <property type="entry name" value="GlgB"/>
    <property type="match status" value="1"/>
</dbReference>
<dbReference type="SMART" id="SM00642">
    <property type="entry name" value="Aamy"/>
    <property type="match status" value="1"/>
</dbReference>
<dbReference type="SUPFAM" id="SSF51445">
    <property type="entry name" value="(Trans)glycosidases"/>
    <property type="match status" value="1"/>
</dbReference>
<dbReference type="SUPFAM" id="SSF81296">
    <property type="entry name" value="E set domains"/>
    <property type="match status" value="2"/>
</dbReference>
<dbReference type="SUPFAM" id="SSF51011">
    <property type="entry name" value="Glycosyl hydrolase domain"/>
    <property type="match status" value="1"/>
</dbReference>
<name>GLGB_ACTP7</name>
<accession>B3H0J1</accession>
<evidence type="ECO:0000255" key="1">
    <source>
        <dbReference type="HAMAP-Rule" id="MF_00685"/>
    </source>
</evidence>
<sequence>MKTYTYSKQDLSFIEQLSQAYCKDPFSYLGLHQAGDVSVIRVFLPEATTVKILSADGQILSEALKIDDSGLFVAQLSQQYSSLNYRLRVGYSLAEIDLEDPYRFTSSLLPMDNWLLAEGTHLRPYEILGAHLKTQEGVSGVHFSVWAPNARRVSVVGDFNYWDGRVNPMRFHAESGIWDIFLPNVEKGALYKFEILDSNGNIRLKSDPYAFASQFRPDTASVVTGLPEKIEVDAKLRHANDPDQPISIYEVHLGSWRRHLENNYWLNYEEIANELIPYVKDMGFTHIELLPITEYPFDGSWGYQPTGLYSPTSRFGSPDDLRTLIRKAHEAGINVILDWVVGHFPTDSHGLTEFDGSHLYEHQDPREGYHQDWNTLIFNYGRHEVFNYLSSNALYWTERFGIDGLRVDAVSSMIYRDYSRKDGEWIPNQYGGRENLEALDFLRRTNRMLKKEGHGAVVIAEESTSFAGITHSPTENGVGFDYKWNMGWMNDTLRYMSLDPIYRQYHHDWMTFGMMYQYSEKFVLPLSHDEVVHGKCSILGKMSGDCWQKFANLRAYYGYMWGYPGKKLLFMGNEFAQGREWNYNESLDWFLLGEQGGGWHKGVLNWVRDLNRTYQKYPALYQLDYDPAGFEWLVVDDWQQSVFAFERKAKNGESVIVVSNFTPVVRHNYRIGVRQDGTYTEILNSDAAYYEGSNVGNYGEIECEAIESHGKPFSIELSIPPLSTIFIACQPKPKEAVEAEQDIVKMAEVAMQKALKPTKKTVSVKAKAHKKAHKNKK</sequence>
<organism>
    <name type="scientific">Actinobacillus pleuropneumoniae serotype 7 (strain AP76)</name>
    <dbReference type="NCBI Taxonomy" id="537457"/>
    <lineage>
        <taxon>Bacteria</taxon>
        <taxon>Pseudomonadati</taxon>
        <taxon>Pseudomonadota</taxon>
        <taxon>Gammaproteobacteria</taxon>
        <taxon>Pasteurellales</taxon>
        <taxon>Pasteurellaceae</taxon>
        <taxon>Actinobacillus</taxon>
    </lineage>
</organism>
<comment type="function">
    <text evidence="1">Catalyzes the formation of the alpha-1,6-glucosidic linkages in glycogen by scission of a 1,4-alpha-linked oligosaccharide from growing alpha-1,4-glucan chains and the subsequent attachment of the oligosaccharide to the alpha-1,6 position.</text>
</comment>
<comment type="catalytic activity">
    <reaction evidence="1">
        <text>Transfers a segment of a (1-&gt;4)-alpha-D-glucan chain to a primary hydroxy group in a similar glucan chain.</text>
        <dbReference type="EC" id="2.4.1.18"/>
    </reaction>
</comment>
<comment type="pathway">
    <text evidence="1">Glycan biosynthesis; glycogen biosynthesis.</text>
</comment>
<comment type="subunit">
    <text evidence="1">Monomer.</text>
</comment>
<comment type="similarity">
    <text evidence="1">Belongs to the glycosyl hydrolase 13 family. GlgB subfamily.</text>
</comment>
<keyword id="KW-0119">Carbohydrate metabolism</keyword>
<keyword id="KW-0320">Glycogen biosynthesis</keyword>
<keyword id="KW-0321">Glycogen metabolism</keyword>
<keyword id="KW-0328">Glycosyltransferase</keyword>
<keyword id="KW-0808">Transferase</keyword>
<feature type="chain" id="PRO_1000131805" description="1,4-alpha-glucan branching enzyme GlgB">
    <location>
        <begin position="1"/>
        <end position="777"/>
    </location>
</feature>
<feature type="active site" description="Nucleophile" evidence="1">
    <location>
        <position position="408"/>
    </location>
</feature>
<feature type="active site" description="Proton donor" evidence="1">
    <location>
        <position position="461"/>
    </location>
</feature>
<proteinExistence type="inferred from homology"/>
<reference key="1">
    <citation type="submission" date="2008-06" db="EMBL/GenBank/DDBJ databases">
        <title>Genome and proteome analysis of A. pleuropneumoniae serotype 7.</title>
        <authorList>
            <person name="Linke B."/>
            <person name="Buettner F."/>
            <person name="Martinez-Arias R."/>
            <person name="Goesmann A."/>
            <person name="Baltes N."/>
            <person name="Tegetmeyer H."/>
            <person name="Singh M."/>
            <person name="Gerlach G.F."/>
        </authorList>
    </citation>
    <scope>NUCLEOTIDE SEQUENCE [LARGE SCALE GENOMIC DNA]</scope>
    <source>
        <strain>AP76</strain>
    </source>
</reference>
<gene>
    <name evidence="1" type="primary">glgB</name>
    <name type="ordered locus">APP7_0351</name>
</gene>
<protein>
    <recommendedName>
        <fullName evidence="1">1,4-alpha-glucan branching enzyme GlgB</fullName>
        <ecNumber evidence="1">2.4.1.18</ecNumber>
    </recommendedName>
    <alternativeName>
        <fullName evidence="1">1,4-alpha-D-glucan:1,4-alpha-D-glucan 6-glucosyl-transferase</fullName>
    </alternativeName>
    <alternativeName>
        <fullName evidence="1">Alpha-(1-&gt;4)-glucan branching enzyme</fullName>
    </alternativeName>
    <alternativeName>
        <fullName evidence="1">Glycogen branching enzyme</fullName>
        <shortName evidence="1">BE</shortName>
    </alternativeName>
</protein>